<gene>
    <name type="primary">PLCD4</name>
</gene>
<protein>
    <recommendedName>
        <fullName>1-phosphatidylinositol 4,5-bisphosphate phosphodiesterase delta-4</fullName>
        <ecNumber evidence="4">3.1.4.11</ecNumber>
    </recommendedName>
    <alternativeName>
        <fullName>Phosphoinositide phospholipase C-delta-4</fullName>
    </alternativeName>
    <alternativeName>
        <fullName>Phospholipase C-delta-4</fullName>
        <shortName>PLC-delta-4</shortName>
    </alternativeName>
</protein>
<name>PLCD4_PONAB</name>
<proteinExistence type="evidence at transcript level"/>
<reference key="1">
    <citation type="submission" date="2004-11" db="EMBL/GenBank/DDBJ databases">
        <authorList>
            <consortium name="The German cDNA consortium"/>
        </authorList>
    </citation>
    <scope>NUCLEOTIDE SEQUENCE [LARGE SCALE MRNA]</scope>
    <source>
        <tissue>Kidney</tissue>
    </source>
</reference>
<evidence type="ECO:0000250" key="1"/>
<evidence type="ECO:0000250" key="2">
    <source>
        <dbReference type="UniProtKB" id="Q62711"/>
    </source>
</evidence>
<evidence type="ECO:0000250" key="3">
    <source>
        <dbReference type="UniProtKB" id="Q8K3R3"/>
    </source>
</evidence>
<evidence type="ECO:0000250" key="4">
    <source>
        <dbReference type="UniProtKB" id="Q9BRC7"/>
    </source>
</evidence>
<evidence type="ECO:0000255" key="5">
    <source>
        <dbReference type="PROSITE-ProRule" id="PRU00041"/>
    </source>
</evidence>
<evidence type="ECO:0000255" key="6">
    <source>
        <dbReference type="PROSITE-ProRule" id="PRU00145"/>
    </source>
</evidence>
<evidence type="ECO:0000255" key="7">
    <source>
        <dbReference type="PROSITE-ProRule" id="PRU00270"/>
    </source>
</evidence>
<evidence type="ECO:0000255" key="8">
    <source>
        <dbReference type="PROSITE-ProRule" id="PRU00271"/>
    </source>
</evidence>
<evidence type="ECO:0000255" key="9">
    <source>
        <dbReference type="PROSITE-ProRule" id="PRU00448"/>
    </source>
</evidence>
<evidence type="ECO:0000256" key="10">
    <source>
        <dbReference type="SAM" id="MobiDB-lite"/>
    </source>
</evidence>
<feature type="chain" id="PRO_0000306828" description="1-phosphatidylinositol 4,5-bisphosphate phosphodiesterase delta-4">
    <location>
        <begin position="1"/>
        <end position="762"/>
    </location>
</feature>
<feature type="domain" description="PH" evidence="6">
    <location>
        <begin position="16"/>
        <end position="124"/>
    </location>
</feature>
<feature type="domain" description="EF-hand 1" evidence="9">
    <location>
        <begin position="134"/>
        <end position="169"/>
    </location>
</feature>
<feature type="domain" description="EF-hand 2" evidence="9">
    <location>
        <begin position="170"/>
        <end position="205"/>
    </location>
</feature>
<feature type="domain" description="EF-hand 3" evidence="9">
    <location>
        <begin position="206"/>
        <end position="237"/>
    </location>
</feature>
<feature type="domain" description="PI-PLC X-box" evidence="7">
    <location>
        <begin position="290"/>
        <end position="435"/>
    </location>
</feature>
<feature type="domain" description="PI-PLC Y-box" evidence="8">
    <location>
        <begin position="493"/>
        <end position="609"/>
    </location>
</feature>
<feature type="domain" description="C2" evidence="5">
    <location>
        <begin position="609"/>
        <end position="736"/>
    </location>
</feature>
<feature type="region of interest" description="Substrate binding" evidence="1">
    <location>
        <begin position="26"/>
        <end position="53"/>
    </location>
</feature>
<feature type="region of interest" description="Disordered" evidence="10">
    <location>
        <begin position="443"/>
        <end position="483"/>
    </location>
</feature>
<feature type="short sequence motif" description="GBA" evidence="4">
    <location>
        <begin position="213"/>
        <end position="243"/>
    </location>
</feature>
<feature type="short sequence motif" description="PDZ-binding">
    <location>
        <begin position="731"/>
        <end position="734"/>
    </location>
</feature>
<feature type="compositionally biased region" description="Acidic residues" evidence="10">
    <location>
        <begin position="443"/>
        <end position="471"/>
    </location>
</feature>
<feature type="active site" evidence="7">
    <location>
        <position position="305"/>
    </location>
</feature>
<feature type="active site" evidence="7">
    <location>
        <position position="350"/>
    </location>
</feature>
<feature type="binding site" evidence="9">
    <location>
        <position position="147"/>
    </location>
    <ligand>
        <name>Ca(2+)</name>
        <dbReference type="ChEBI" id="CHEBI:29108"/>
        <label>1</label>
    </ligand>
</feature>
<feature type="binding site" evidence="9">
    <location>
        <position position="149"/>
    </location>
    <ligand>
        <name>Ca(2+)</name>
        <dbReference type="ChEBI" id="CHEBI:29108"/>
        <label>1</label>
    </ligand>
</feature>
<feature type="binding site" evidence="9">
    <location>
        <position position="151"/>
    </location>
    <ligand>
        <name>Ca(2+)</name>
        <dbReference type="ChEBI" id="CHEBI:29108"/>
        <label>1</label>
    </ligand>
</feature>
<feature type="binding site" evidence="9">
    <location>
        <position position="153"/>
    </location>
    <ligand>
        <name>Ca(2+)</name>
        <dbReference type="ChEBI" id="CHEBI:29108"/>
        <label>1</label>
    </ligand>
</feature>
<feature type="binding site" evidence="9">
    <location>
        <position position="158"/>
    </location>
    <ligand>
        <name>Ca(2+)</name>
        <dbReference type="ChEBI" id="CHEBI:29108"/>
        <label>1</label>
    </ligand>
</feature>
<feature type="binding site" evidence="9">
    <location>
        <position position="183"/>
    </location>
    <ligand>
        <name>Ca(2+)</name>
        <dbReference type="ChEBI" id="CHEBI:29108"/>
        <label>2</label>
    </ligand>
</feature>
<feature type="binding site" evidence="9">
    <location>
        <position position="185"/>
    </location>
    <ligand>
        <name>Ca(2+)</name>
        <dbReference type="ChEBI" id="CHEBI:29108"/>
        <label>2</label>
    </ligand>
</feature>
<feature type="binding site" evidence="9">
    <location>
        <position position="187"/>
    </location>
    <ligand>
        <name>Ca(2+)</name>
        <dbReference type="ChEBI" id="CHEBI:29108"/>
        <label>2</label>
    </ligand>
</feature>
<feature type="binding site" evidence="9">
    <location>
        <position position="189"/>
    </location>
    <ligand>
        <name>Ca(2+)</name>
        <dbReference type="ChEBI" id="CHEBI:29108"/>
        <label>2</label>
    </ligand>
</feature>
<feature type="binding site" evidence="9">
    <location>
        <position position="194"/>
    </location>
    <ligand>
        <name>Ca(2+)</name>
        <dbReference type="ChEBI" id="CHEBI:29108"/>
        <label>2</label>
    </ligand>
</feature>
<feature type="binding site" evidence="1">
    <location>
        <position position="306"/>
    </location>
    <ligand>
        <name>Ca(2+)</name>
        <dbReference type="ChEBI" id="CHEBI:29108"/>
        <label>3</label>
        <note>catalytic</note>
    </ligand>
</feature>
<feature type="binding site" evidence="1">
    <location>
        <position position="335"/>
    </location>
    <ligand>
        <name>Ca(2+)</name>
        <dbReference type="ChEBI" id="CHEBI:29108"/>
        <label>3</label>
        <note>catalytic</note>
    </ligand>
</feature>
<feature type="binding site" evidence="1">
    <location>
        <position position="337"/>
    </location>
    <ligand>
        <name>Ca(2+)</name>
        <dbReference type="ChEBI" id="CHEBI:29108"/>
        <label>3</label>
        <note>catalytic</note>
    </ligand>
</feature>
<feature type="binding site" evidence="1">
    <location>
        <position position="384"/>
    </location>
    <ligand>
        <name>Ca(2+)</name>
        <dbReference type="ChEBI" id="CHEBI:29108"/>
        <label>3</label>
        <note>catalytic</note>
    </ligand>
</feature>
<feature type="binding site" evidence="1">
    <location>
        <position position="433"/>
    </location>
    <ligand>
        <name>substrate</name>
    </ligand>
</feature>
<feature type="binding site" evidence="1">
    <location>
        <position position="435"/>
    </location>
    <ligand>
        <name>substrate</name>
    </ligand>
</feature>
<feature type="binding site" evidence="1">
    <location>
        <position position="522"/>
    </location>
    <ligand>
        <name>substrate</name>
    </ligand>
</feature>
<feature type="binding site" evidence="1">
    <location>
        <position position="549"/>
    </location>
    <ligand>
        <name>substrate</name>
    </ligand>
</feature>
<feature type="binding site" evidence="1">
    <location>
        <position position="650"/>
    </location>
    <ligand>
        <name>Ca(2+)</name>
        <dbReference type="ChEBI" id="CHEBI:29108"/>
        <label>4</label>
    </ligand>
</feature>
<feature type="binding site" evidence="1">
    <location>
        <position position="652"/>
    </location>
    <ligand>
        <name>Ca(2+)</name>
        <dbReference type="ChEBI" id="CHEBI:29108"/>
        <label>4</label>
    </ligand>
</feature>
<feature type="binding site" evidence="1">
    <location>
        <position position="676"/>
    </location>
    <ligand>
        <name>Ca(2+)</name>
        <dbReference type="ChEBI" id="CHEBI:29108"/>
        <label>4</label>
    </ligand>
</feature>
<feature type="binding site" evidence="1">
    <location>
        <position position="705"/>
    </location>
    <ligand>
        <name>Ca(2+)</name>
        <dbReference type="ChEBI" id="CHEBI:29108"/>
        <label>5</label>
    </ligand>
</feature>
<feature type="binding site" evidence="1">
    <location>
        <position position="706"/>
    </location>
    <ligand>
        <name>Ca(2+)</name>
        <dbReference type="ChEBI" id="CHEBI:29108"/>
        <label>5</label>
    </ligand>
</feature>
<feature type="binding site" evidence="1">
    <location>
        <position position="707"/>
    </location>
    <ligand>
        <name>Ca(2+)</name>
        <dbReference type="ChEBI" id="CHEBI:29108"/>
        <label>5</label>
    </ligand>
</feature>
<feature type="modified residue" description="Phosphoserine" evidence="2">
    <location>
        <position position="457"/>
    </location>
</feature>
<keyword id="KW-0106">Calcium</keyword>
<keyword id="KW-0963">Cytoplasm</keyword>
<keyword id="KW-0256">Endoplasmic reticulum</keyword>
<keyword id="KW-0378">Hydrolase</keyword>
<keyword id="KW-0442">Lipid degradation</keyword>
<keyword id="KW-0443">Lipid metabolism</keyword>
<keyword id="KW-0472">Membrane</keyword>
<keyword id="KW-0479">Metal-binding</keyword>
<keyword id="KW-0539">Nucleus</keyword>
<keyword id="KW-0597">Phosphoprotein</keyword>
<keyword id="KW-1185">Reference proteome</keyword>
<keyword id="KW-0677">Repeat</keyword>
<keyword id="KW-0807">Transducer</keyword>
<organism>
    <name type="scientific">Pongo abelii</name>
    <name type="common">Sumatran orangutan</name>
    <name type="synonym">Pongo pygmaeus abelii</name>
    <dbReference type="NCBI Taxonomy" id="9601"/>
    <lineage>
        <taxon>Eukaryota</taxon>
        <taxon>Metazoa</taxon>
        <taxon>Chordata</taxon>
        <taxon>Craniata</taxon>
        <taxon>Vertebrata</taxon>
        <taxon>Euteleostomi</taxon>
        <taxon>Mammalia</taxon>
        <taxon>Eutheria</taxon>
        <taxon>Euarchontoglires</taxon>
        <taxon>Primates</taxon>
        <taxon>Haplorrhini</taxon>
        <taxon>Catarrhini</taxon>
        <taxon>Hominidae</taxon>
        <taxon>Pongo</taxon>
    </lineage>
</organism>
<dbReference type="EC" id="3.1.4.11" evidence="4"/>
<dbReference type="EMBL" id="CR857436">
    <property type="protein sequence ID" value="CAH89727.1"/>
    <property type="molecule type" value="mRNA"/>
</dbReference>
<dbReference type="RefSeq" id="NP_001124787.1">
    <property type="nucleotide sequence ID" value="NM_001131315.2"/>
</dbReference>
<dbReference type="SMR" id="Q5RET0"/>
<dbReference type="FunCoup" id="Q5RET0">
    <property type="interactions" value="819"/>
</dbReference>
<dbReference type="STRING" id="9601.ENSPPYP00000014724"/>
<dbReference type="GeneID" id="100171640"/>
<dbReference type="KEGG" id="pon:100171640"/>
<dbReference type="CTD" id="84812"/>
<dbReference type="eggNOG" id="KOG0169">
    <property type="taxonomic scope" value="Eukaryota"/>
</dbReference>
<dbReference type="InParanoid" id="Q5RET0"/>
<dbReference type="OrthoDB" id="269822at2759"/>
<dbReference type="Proteomes" id="UP000001595">
    <property type="component" value="Unplaced"/>
</dbReference>
<dbReference type="GO" id="GO:0005783">
    <property type="term" value="C:endoplasmic reticulum"/>
    <property type="evidence" value="ECO:0007669"/>
    <property type="project" value="UniProtKB-SubCell"/>
</dbReference>
<dbReference type="GO" id="GO:0005634">
    <property type="term" value="C:nucleus"/>
    <property type="evidence" value="ECO:0007669"/>
    <property type="project" value="UniProtKB-SubCell"/>
</dbReference>
<dbReference type="GO" id="GO:0005886">
    <property type="term" value="C:plasma membrane"/>
    <property type="evidence" value="ECO:0007669"/>
    <property type="project" value="TreeGrafter"/>
</dbReference>
<dbReference type="GO" id="GO:0005509">
    <property type="term" value="F:calcium ion binding"/>
    <property type="evidence" value="ECO:0007669"/>
    <property type="project" value="InterPro"/>
</dbReference>
<dbReference type="GO" id="GO:0001965">
    <property type="term" value="F:G-protein alpha-subunit binding"/>
    <property type="evidence" value="ECO:0000250"/>
    <property type="project" value="UniProtKB"/>
</dbReference>
<dbReference type="GO" id="GO:0004435">
    <property type="term" value="F:phosphatidylinositol-4,5-bisphosphate phospholipase C activity"/>
    <property type="evidence" value="ECO:0007669"/>
    <property type="project" value="UniProtKB-EC"/>
</dbReference>
<dbReference type="GO" id="GO:0035556">
    <property type="term" value="P:intracellular signal transduction"/>
    <property type="evidence" value="ECO:0007669"/>
    <property type="project" value="InterPro"/>
</dbReference>
<dbReference type="GO" id="GO:0016042">
    <property type="term" value="P:lipid catabolic process"/>
    <property type="evidence" value="ECO:0007669"/>
    <property type="project" value="UniProtKB-KW"/>
</dbReference>
<dbReference type="CDD" id="cd00275">
    <property type="entry name" value="C2_PLC_like"/>
    <property type="match status" value="1"/>
</dbReference>
<dbReference type="CDD" id="cd13363">
    <property type="entry name" value="PH_PLC_delta"/>
    <property type="match status" value="1"/>
</dbReference>
<dbReference type="FunFam" id="1.10.238.10:FF:000005">
    <property type="entry name" value="Phosphoinositide phospholipase C"/>
    <property type="match status" value="1"/>
</dbReference>
<dbReference type="FunFam" id="1.10.238.10:FF:000145">
    <property type="entry name" value="Phosphoinositide phospholipase C"/>
    <property type="match status" value="1"/>
</dbReference>
<dbReference type="FunFam" id="2.30.29.30:FF:000088">
    <property type="entry name" value="Phosphoinositide phospholipase C"/>
    <property type="match status" value="1"/>
</dbReference>
<dbReference type="FunFam" id="2.60.40.150:FF:000058">
    <property type="entry name" value="Phosphoinositide phospholipase C"/>
    <property type="match status" value="1"/>
</dbReference>
<dbReference type="FunFam" id="3.20.20.190:FF:000020">
    <property type="entry name" value="Phosphoinositide phospholipase C"/>
    <property type="match status" value="1"/>
</dbReference>
<dbReference type="Gene3D" id="2.60.40.150">
    <property type="entry name" value="C2 domain"/>
    <property type="match status" value="1"/>
</dbReference>
<dbReference type="Gene3D" id="1.10.238.10">
    <property type="entry name" value="EF-hand"/>
    <property type="match status" value="2"/>
</dbReference>
<dbReference type="Gene3D" id="3.20.20.190">
    <property type="entry name" value="Phosphatidylinositol (PI) phosphodiesterase"/>
    <property type="match status" value="1"/>
</dbReference>
<dbReference type="Gene3D" id="2.30.29.30">
    <property type="entry name" value="Pleckstrin-homology domain (PH domain)/Phosphotyrosine-binding domain (PTB)"/>
    <property type="match status" value="1"/>
</dbReference>
<dbReference type="InterPro" id="IPR000008">
    <property type="entry name" value="C2_dom"/>
</dbReference>
<dbReference type="InterPro" id="IPR035892">
    <property type="entry name" value="C2_domain_sf"/>
</dbReference>
<dbReference type="InterPro" id="IPR011992">
    <property type="entry name" value="EF-hand-dom_pair"/>
</dbReference>
<dbReference type="InterPro" id="IPR018247">
    <property type="entry name" value="EF_Hand_1_Ca_BS"/>
</dbReference>
<dbReference type="InterPro" id="IPR002048">
    <property type="entry name" value="EF_hand_dom"/>
</dbReference>
<dbReference type="InterPro" id="IPR011993">
    <property type="entry name" value="PH-like_dom_sf"/>
</dbReference>
<dbReference type="InterPro" id="IPR001849">
    <property type="entry name" value="PH_domain"/>
</dbReference>
<dbReference type="InterPro" id="IPR001192">
    <property type="entry name" value="PI-PLC_fam"/>
</dbReference>
<dbReference type="InterPro" id="IPR017946">
    <property type="entry name" value="PLC-like_Pdiesterase_TIM-brl"/>
</dbReference>
<dbReference type="InterPro" id="IPR015359">
    <property type="entry name" value="PLC_EF-hand-like"/>
</dbReference>
<dbReference type="InterPro" id="IPR000909">
    <property type="entry name" value="PLipase_C_PInositol-sp_X_dom"/>
</dbReference>
<dbReference type="InterPro" id="IPR001711">
    <property type="entry name" value="PLipase_C_Pinositol-sp_Y"/>
</dbReference>
<dbReference type="PANTHER" id="PTHR10336:SF31">
    <property type="entry name" value="1-PHOSPHATIDYLINOSITOL 4,5-BISPHOSPHATE PHOSPHODIESTERASE DELTA-4"/>
    <property type="match status" value="1"/>
</dbReference>
<dbReference type="PANTHER" id="PTHR10336">
    <property type="entry name" value="PHOSPHOINOSITIDE-SPECIFIC PHOSPHOLIPASE C FAMILY PROTEIN"/>
    <property type="match status" value="1"/>
</dbReference>
<dbReference type="Pfam" id="PF00168">
    <property type="entry name" value="C2"/>
    <property type="match status" value="1"/>
</dbReference>
<dbReference type="Pfam" id="PF13202">
    <property type="entry name" value="EF-hand_5"/>
    <property type="match status" value="1"/>
</dbReference>
<dbReference type="Pfam" id="PF09279">
    <property type="entry name" value="EF-hand_like"/>
    <property type="match status" value="1"/>
</dbReference>
<dbReference type="Pfam" id="PF00169">
    <property type="entry name" value="PH"/>
    <property type="match status" value="1"/>
</dbReference>
<dbReference type="Pfam" id="PF00388">
    <property type="entry name" value="PI-PLC-X"/>
    <property type="match status" value="1"/>
</dbReference>
<dbReference type="Pfam" id="PF00387">
    <property type="entry name" value="PI-PLC-Y"/>
    <property type="match status" value="1"/>
</dbReference>
<dbReference type="PRINTS" id="PR00390">
    <property type="entry name" value="PHPHLIPASEC"/>
</dbReference>
<dbReference type="SMART" id="SM00239">
    <property type="entry name" value="C2"/>
    <property type="match status" value="1"/>
</dbReference>
<dbReference type="SMART" id="SM00054">
    <property type="entry name" value="EFh"/>
    <property type="match status" value="3"/>
</dbReference>
<dbReference type="SMART" id="SM00233">
    <property type="entry name" value="PH"/>
    <property type="match status" value="1"/>
</dbReference>
<dbReference type="SMART" id="SM00148">
    <property type="entry name" value="PLCXc"/>
    <property type="match status" value="1"/>
</dbReference>
<dbReference type="SMART" id="SM00149">
    <property type="entry name" value="PLCYc"/>
    <property type="match status" value="1"/>
</dbReference>
<dbReference type="SUPFAM" id="SSF49562">
    <property type="entry name" value="C2 domain (Calcium/lipid-binding domain, CaLB)"/>
    <property type="match status" value="1"/>
</dbReference>
<dbReference type="SUPFAM" id="SSF47473">
    <property type="entry name" value="EF-hand"/>
    <property type="match status" value="1"/>
</dbReference>
<dbReference type="SUPFAM" id="SSF50729">
    <property type="entry name" value="PH domain-like"/>
    <property type="match status" value="1"/>
</dbReference>
<dbReference type="SUPFAM" id="SSF51695">
    <property type="entry name" value="PLC-like phosphodiesterases"/>
    <property type="match status" value="1"/>
</dbReference>
<dbReference type="PROSITE" id="PS50004">
    <property type="entry name" value="C2"/>
    <property type="match status" value="1"/>
</dbReference>
<dbReference type="PROSITE" id="PS00018">
    <property type="entry name" value="EF_HAND_1"/>
    <property type="match status" value="2"/>
</dbReference>
<dbReference type="PROSITE" id="PS50222">
    <property type="entry name" value="EF_HAND_2"/>
    <property type="match status" value="3"/>
</dbReference>
<dbReference type="PROSITE" id="PS50003">
    <property type="entry name" value="PH_DOMAIN"/>
    <property type="match status" value="1"/>
</dbReference>
<dbReference type="PROSITE" id="PS50007">
    <property type="entry name" value="PIPLC_X_DOMAIN"/>
    <property type="match status" value="1"/>
</dbReference>
<dbReference type="PROSITE" id="PS50008">
    <property type="entry name" value="PIPLC_Y_DOMAIN"/>
    <property type="match status" value="1"/>
</dbReference>
<comment type="function">
    <text evidence="1">Hydrolyzes the phosphatidylinositol 4,5-bisphosphate (PIP2) to generate 2 second messenger molecules diacylglycerol (DAG) and inositol 1,4,5-trisphosphate (IP3). DAG mediates the activation of protein kinase C (PKC), while IP3 releases Ca(2+) from intracellular stores. Required for acrosome reaction in sperm during fertilization, probably by acting as an important enzyme for intracellular Ca(2+) mobilization in the zona pellucida-induced acrosome reaction. May play a role in cell growth. Modulates the liver regeneration in cooperation with nuclear PKC. Overexpression up-regulates the Erk signaling pathway and proliferation (By similarity).</text>
</comment>
<comment type="catalytic activity">
    <reaction evidence="4">
        <text>a 1,2-diacyl-sn-glycero-3-phospho-(1D-myo-inositol-4,5-bisphosphate) + H2O = 1D-myo-inositol 1,4,5-trisphosphate + a 1,2-diacyl-sn-glycerol + H(+)</text>
        <dbReference type="Rhea" id="RHEA:33179"/>
        <dbReference type="ChEBI" id="CHEBI:15377"/>
        <dbReference type="ChEBI" id="CHEBI:15378"/>
        <dbReference type="ChEBI" id="CHEBI:17815"/>
        <dbReference type="ChEBI" id="CHEBI:58456"/>
        <dbReference type="ChEBI" id="CHEBI:203600"/>
        <dbReference type="EC" id="3.1.4.11"/>
    </reaction>
    <physiologicalReaction direction="left-to-right" evidence="4">
        <dbReference type="Rhea" id="RHEA:33180"/>
    </physiologicalReaction>
</comment>
<comment type="catalytic activity">
    <reaction evidence="4">
        <text>a 1,2-diacyl-sn-glycero-3-phospho-(1D-myo-inositol) + H2O = 1D-myo-inositol 1-phosphate + a 1,2-diacyl-sn-glycerol + H(+)</text>
        <dbReference type="Rhea" id="RHEA:43484"/>
        <dbReference type="ChEBI" id="CHEBI:15377"/>
        <dbReference type="ChEBI" id="CHEBI:15378"/>
        <dbReference type="ChEBI" id="CHEBI:17815"/>
        <dbReference type="ChEBI" id="CHEBI:57880"/>
        <dbReference type="ChEBI" id="CHEBI:58433"/>
    </reaction>
    <physiologicalReaction direction="left-to-right" evidence="4">
        <dbReference type="Rhea" id="RHEA:43485"/>
    </physiologicalReaction>
</comment>
<comment type="cofactor">
    <cofactor evidence="5">
        <name>Ca(2+)</name>
        <dbReference type="ChEBI" id="CHEBI:29108"/>
    </cofactor>
    <text evidence="1">Binds 5 Ca(2+) ions per subunit. Two of the Ca(2+) ions are bound to the C2 domain.</text>
</comment>
<comment type="subunit">
    <text evidence="3 4">Interacts with GRIP1 (By similarity). Interacts (via GBA motif) with guanine nucleotide-binding protein G(i) alpha subunit GNAI3 (inactive GDP-bound form); low-affinity interaction (By similarity).</text>
</comment>
<comment type="subcellular location">
    <subcellularLocation>
        <location evidence="1">Membrane</location>
        <topology evidence="1">Peripheral membrane protein</topology>
    </subcellularLocation>
    <subcellularLocation>
        <location evidence="1">Nucleus</location>
    </subcellularLocation>
    <subcellularLocation>
        <location evidence="1">Cytoplasm</location>
    </subcellularLocation>
    <subcellularLocation>
        <location evidence="1">Endoplasmic reticulum</location>
    </subcellularLocation>
    <text evidence="1">Localizes primarily to intracellular membranes mostly to the endoplasmic reticulum.</text>
</comment>
<comment type="domain">
    <text evidence="1">The PDZ-binding motif mediates the interaction with GRIP1.</text>
</comment>
<comment type="domain">
    <text evidence="1">The C2 domain mediates pre-localization to the membrane prior to Ca(2+) import and non-selective Ca(2+)-mediated targeting to various cellular membranes.</text>
</comment>
<comment type="domain">
    <text evidence="1">The PH domain is not a critical determinant of the membrane localization.</text>
</comment>
<comment type="domain">
    <text evidence="4">The GBA (G-alpha binding and activating) motif mediates binding to the alpha subunits of guanine nucleotide-binding proteins (G proteins).</text>
</comment>
<accession>Q5RET0</accession>
<sequence length="762" mass="87625">MASLLQDQLTTDQDLLLMQEGMPMRKVRSKSWKKLRYFRLQNDGMTVWHARQARGSAKPSFSISDVDTIRNGHDSELLRSLAEELPLEQGFTVVFHGRRSNLDLVANSVEEAQMWMRGLQLLVDLVTSMDHQERLDQWLSDWFQRGDKNQDGKMSFQEVQRLLHLMNVEMDQEYAFSLFQAADTSQSGTLEGEEFVQFYKALTKRAEVQELFESFSADGQKLTLLEFLDFLREEQKERDCTSELALELIDHYEPSDSGKLRHVLSMDGFLSYLCSKDGDIFNPACLPIYQDMTQPLNHYFICSSHNTYLVGDQLCGQSSVEGYIRALKRGCRCVEVDVWDGPSGEPVVYHGHTLTSRILFKDVVATVAQYAFQTSDYPVILSLETHCSWEQQQTMARHLTEILGEQLLSTTLDGVLPTQLPSPEELRRRILVKGKKLTLEEDLEYEEEEAEPELEESELALESQFETEPEPQEQNLQSKDKKKKSKPILCPALSSLVIYLKSVSFRSFTHSKEHYHFYEISSFSETKAERLIKEAGNEFVQHNTWQLSRVYPSGLRTDSSNYNPQELWNAGCQMVAMNMQTAGLEMDICDGHFRQNGGCGYVLKPDFLRDIQSSFHPERPISPFKAQTLLIQVISGQQLPKVDKTKEGSIVDPLVKVQIFGVRLDTARQETNYVENNGFNPYWGETLCFRVLVPELAMLRFVVMDYDWKSRNDFIGQYTLPWTCMQQGYRHIHLLSKVGISLRPASIFVYICIQEDLEGDES</sequence>